<protein>
    <recommendedName>
        <fullName evidence="4">Major glycerophosphoinositol permease GIT3</fullName>
        <shortName evidence="4">GroPCho permease GIT3</shortName>
    </recommendedName>
    <alternativeName>
        <fullName evidence="5">Glycerophosphodiester transporter GIT3</fullName>
    </alternativeName>
</protein>
<keyword id="KW-1003">Cell membrane</keyword>
<keyword id="KW-0325">Glycoprotein</keyword>
<keyword id="KW-0472">Membrane</keyword>
<keyword id="KW-1185">Reference proteome</keyword>
<keyword id="KW-0812">Transmembrane</keyword>
<keyword id="KW-1133">Transmembrane helix</keyword>
<keyword id="KW-0813">Transport</keyword>
<keyword id="KW-0843">Virulence</keyword>
<dbReference type="EMBL" id="CP017627">
    <property type="protein sequence ID" value="AOW29530.1"/>
    <property type="molecule type" value="Genomic_DNA"/>
</dbReference>
<dbReference type="RefSeq" id="XP_715741.1">
    <property type="nucleotide sequence ID" value="XM_710648.2"/>
</dbReference>
<dbReference type="SMR" id="Q5A1L6"/>
<dbReference type="STRING" id="237561.Q5A1L6"/>
<dbReference type="GlyCosmos" id="Q5A1L6">
    <property type="glycosylation" value="3 sites, No reported glycans"/>
</dbReference>
<dbReference type="EnsemblFungi" id="C5_00880C_A-T">
    <property type="protein sequence ID" value="C5_00880C_A-T-p1"/>
    <property type="gene ID" value="C5_00880C_A"/>
</dbReference>
<dbReference type="GeneID" id="3642634"/>
<dbReference type="KEGG" id="cal:CAALFM_C500880CA"/>
<dbReference type="CGD" id="CAL0000176352">
    <property type="gene designation" value="GIT3"/>
</dbReference>
<dbReference type="VEuPathDB" id="FungiDB:C5_00880C_A"/>
<dbReference type="eggNOG" id="KOG0252">
    <property type="taxonomic scope" value="Eukaryota"/>
</dbReference>
<dbReference type="HOGENOM" id="CLU_001265_46_12_1"/>
<dbReference type="InParanoid" id="Q5A1L6"/>
<dbReference type="OMA" id="IMFTNFQ"/>
<dbReference type="OrthoDB" id="2261376at2759"/>
<dbReference type="PHI-base" id="PHI:3822"/>
<dbReference type="Proteomes" id="UP000000559">
    <property type="component" value="Chromosome 5"/>
</dbReference>
<dbReference type="GO" id="GO:0005886">
    <property type="term" value="C:plasma membrane"/>
    <property type="evidence" value="ECO:0000318"/>
    <property type="project" value="GO_Central"/>
</dbReference>
<dbReference type="GO" id="GO:0046943">
    <property type="term" value="F:carboxylic acid transmembrane transporter activity"/>
    <property type="evidence" value="ECO:0000318"/>
    <property type="project" value="GO_Central"/>
</dbReference>
<dbReference type="GO" id="GO:0001406">
    <property type="term" value="F:glycerophosphodiester transmembrane transporter activity"/>
    <property type="evidence" value="ECO:0000315"/>
    <property type="project" value="CGD"/>
</dbReference>
<dbReference type="GO" id="GO:0046942">
    <property type="term" value="P:carboxylic acid transport"/>
    <property type="evidence" value="ECO:0000318"/>
    <property type="project" value="GO_Central"/>
</dbReference>
<dbReference type="GO" id="GO:0001407">
    <property type="term" value="P:glycerophosphodiester transmembrane transport"/>
    <property type="evidence" value="ECO:0000315"/>
    <property type="project" value="CGD"/>
</dbReference>
<dbReference type="FunFam" id="1.20.1250.20:FF:000140">
    <property type="entry name" value="Putative MFS phospholipid transporter"/>
    <property type="match status" value="1"/>
</dbReference>
<dbReference type="Gene3D" id="1.20.1250.20">
    <property type="entry name" value="MFS general substrate transporter like domains"/>
    <property type="match status" value="1"/>
</dbReference>
<dbReference type="InterPro" id="IPR020846">
    <property type="entry name" value="MFS_dom"/>
</dbReference>
<dbReference type="InterPro" id="IPR005828">
    <property type="entry name" value="MFS_sugar_transport-like"/>
</dbReference>
<dbReference type="InterPro" id="IPR036259">
    <property type="entry name" value="MFS_trans_sf"/>
</dbReference>
<dbReference type="PANTHER" id="PTHR23508">
    <property type="entry name" value="CARBOXYLIC ACID TRANSPORTER PROTEIN HOMOLOG"/>
    <property type="match status" value="1"/>
</dbReference>
<dbReference type="PANTHER" id="PTHR23508:SF10">
    <property type="entry name" value="CARBOXYLIC ACID TRANSPORTER PROTEIN HOMOLOG"/>
    <property type="match status" value="1"/>
</dbReference>
<dbReference type="Pfam" id="PF00083">
    <property type="entry name" value="Sugar_tr"/>
    <property type="match status" value="2"/>
</dbReference>
<dbReference type="SUPFAM" id="SSF103473">
    <property type="entry name" value="MFS general substrate transporter"/>
    <property type="match status" value="1"/>
</dbReference>
<dbReference type="PROSITE" id="PS50850">
    <property type="entry name" value="MFS"/>
    <property type="match status" value="1"/>
</dbReference>
<accession>Q5A1L6</accession>
<sequence>MSTRDLPHSFSELSYGWVKRIRAEFTVGKSKEQLLAEDYHSTTDEDSEVVTSVKANSLWPAFASGAGLFSDGYVNNSISTVLFCLKKIYPDEITKSNAINNIASIAFVGTVVGQLGFGYISDRIARKGGMMAANVMLIFFTLMCAVGSWGVTVQGFFACLTVWRFFLGVAIGAEYPTSSVIASEFANQLPPGKRNRYFSWFTNAMIDSGFVVSAFVPFVLIWIFTEKHLRALWRVAIGLGVIPPLSLFFMRLKMKNSSSFQKLHMKNVKYRDYPWWLIVKFYWFRLTIVSLIWFIYDFSAYSFGNFNTIIIGEIIPEAPIWKQWGWSIVFNLFYIPGAFLGAISADYIGPRLTLALGVGIQGVIGIAMSACLNSLKKHIAGFVVVFGIFTTFGEFGPGDNIGLLASKTSATAIRGQYYGIAAAIGKIGAFVGTWVFPAIQSKYANNANPDLQLQVPFYISSALCLFSACLAIFFCPQVGQDAIYKEDHDFVQYLSNNGFDINMLGEGGDVREVCRESDSLEKGKRDDFQVDNNSL</sequence>
<feature type="chain" id="PRO_0000439800" description="Major glycerophosphoinositol permease GIT3">
    <location>
        <begin position="1"/>
        <end position="535"/>
    </location>
</feature>
<feature type="transmembrane region" description="Helical" evidence="1">
    <location>
        <begin position="49"/>
        <end position="69"/>
    </location>
</feature>
<feature type="transmembrane region" description="Helical" evidence="1">
    <location>
        <begin position="101"/>
        <end position="121"/>
    </location>
</feature>
<feature type="transmembrane region" description="Helical" evidence="1">
    <location>
        <begin position="137"/>
        <end position="157"/>
    </location>
</feature>
<feature type="transmembrane region" description="Helical" evidence="1">
    <location>
        <begin position="165"/>
        <end position="185"/>
    </location>
</feature>
<feature type="transmembrane region" description="Helical" evidence="1">
    <location>
        <begin position="204"/>
        <end position="224"/>
    </location>
</feature>
<feature type="transmembrane region" description="Helical" evidence="1">
    <location>
        <begin position="232"/>
        <end position="252"/>
    </location>
</feature>
<feature type="transmembrane region" description="Helical" evidence="1">
    <location>
        <begin position="275"/>
        <end position="295"/>
    </location>
</feature>
<feature type="transmembrane region" description="Helical" evidence="1">
    <location>
        <begin position="324"/>
        <end position="344"/>
    </location>
</feature>
<feature type="transmembrane region" description="Helical" evidence="1">
    <location>
        <begin position="352"/>
        <end position="372"/>
    </location>
</feature>
<feature type="transmembrane region" description="Helical" evidence="1">
    <location>
        <begin position="378"/>
        <end position="398"/>
    </location>
</feature>
<feature type="transmembrane region" description="Helical" evidence="1">
    <location>
        <begin position="419"/>
        <end position="439"/>
    </location>
</feature>
<feature type="transmembrane region" description="Helical" evidence="1">
    <location>
        <begin position="455"/>
        <end position="475"/>
    </location>
</feature>
<feature type="glycosylation site" description="N-linked (GlcNAc...) asparagine" evidence="2">
    <location>
        <position position="75"/>
    </location>
</feature>
<feature type="glycosylation site" description="N-linked (GlcNAc...) asparagine" evidence="2">
    <location>
        <position position="256"/>
    </location>
</feature>
<feature type="glycosylation site" description="N-linked (GlcNAc...) asparagine" evidence="2">
    <location>
        <position position="532"/>
    </location>
</feature>
<evidence type="ECO:0000255" key="1"/>
<evidence type="ECO:0000255" key="2">
    <source>
        <dbReference type="PROSITE-ProRule" id="PRU00498"/>
    </source>
</evidence>
<evidence type="ECO:0000269" key="3">
    <source>
    </source>
</evidence>
<evidence type="ECO:0000303" key="4">
    <source>
    </source>
</evidence>
<evidence type="ECO:0000305" key="5"/>
<evidence type="ECO:0000305" key="6">
    <source>
    </source>
</evidence>
<name>GIT3_CANAL</name>
<reference key="1">
    <citation type="journal article" date="2004" name="Proc. Natl. Acad. Sci. U.S.A.">
        <title>The diploid genome sequence of Candida albicans.</title>
        <authorList>
            <person name="Jones T."/>
            <person name="Federspiel N.A."/>
            <person name="Chibana H."/>
            <person name="Dungan J."/>
            <person name="Kalman S."/>
            <person name="Magee B.B."/>
            <person name="Newport G."/>
            <person name="Thorstenson Y.R."/>
            <person name="Agabian N."/>
            <person name="Magee P.T."/>
            <person name="Davis R.W."/>
            <person name="Scherer S."/>
        </authorList>
    </citation>
    <scope>NUCLEOTIDE SEQUENCE [LARGE SCALE GENOMIC DNA]</scope>
    <source>
        <strain>SC5314 / ATCC MYA-2876</strain>
    </source>
</reference>
<reference key="2">
    <citation type="journal article" date="2007" name="Genome Biol.">
        <title>Assembly of the Candida albicans genome into sixteen supercontigs aligned on the eight chromosomes.</title>
        <authorList>
            <person name="van het Hoog M."/>
            <person name="Rast T.J."/>
            <person name="Martchenko M."/>
            <person name="Grindle S."/>
            <person name="Dignard D."/>
            <person name="Hogues H."/>
            <person name="Cuomo C."/>
            <person name="Berriman M."/>
            <person name="Scherer S."/>
            <person name="Magee B.B."/>
            <person name="Whiteway M."/>
            <person name="Chibana H."/>
            <person name="Nantel A."/>
            <person name="Magee P.T."/>
        </authorList>
    </citation>
    <scope>GENOME REANNOTATION</scope>
    <source>
        <strain>SC5314 / ATCC MYA-2876</strain>
    </source>
</reference>
<reference key="3">
    <citation type="journal article" date="2013" name="Genome Biol.">
        <title>Assembly of a phased diploid Candida albicans genome facilitates allele-specific measurements and provides a simple model for repeat and indel structure.</title>
        <authorList>
            <person name="Muzzey D."/>
            <person name="Schwartz K."/>
            <person name="Weissman J.S."/>
            <person name="Sherlock G."/>
        </authorList>
    </citation>
    <scope>NUCLEOTIDE SEQUENCE [LARGE SCALE GENOMIC DNA]</scope>
    <scope>GENOME REANNOTATION</scope>
    <source>
        <strain>SC5314 / ATCC MYA-2876</strain>
    </source>
</reference>
<reference key="4">
    <citation type="journal article" date="2013" name="J. Biol. Chem.">
        <title>Glycerophosphocholine utilization by Candida albicans: role of the Git3 transporter in virulence.</title>
        <authorList>
            <person name="Bishop A.C."/>
            <person name="Ganguly S."/>
            <person name="Solis N.V."/>
            <person name="Cooley B.M."/>
            <person name="Jensen-Seaman M.I."/>
            <person name="Filler S.G."/>
            <person name="Mitchell A.P."/>
            <person name="Patton-Vogt J."/>
        </authorList>
    </citation>
    <scope>FUNCTION</scope>
    <scope>DISRUPTION PHENOTYPE</scope>
    <scope>INDUCTION</scope>
    <scope>BIOPHYSICOCHEMICAL PROPERTIES</scope>
</reference>
<organism>
    <name type="scientific">Candida albicans (strain SC5314 / ATCC MYA-2876)</name>
    <name type="common">Yeast</name>
    <dbReference type="NCBI Taxonomy" id="237561"/>
    <lineage>
        <taxon>Eukaryota</taxon>
        <taxon>Fungi</taxon>
        <taxon>Dikarya</taxon>
        <taxon>Ascomycota</taxon>
        <taxon>Saccharomycotina</taxon>
        <taxon>Pichiomycetes</taxon>
        <taxon>Debaryomycetaceae</taxon>
        <taxon>Candida/Lodderomyces clade</taxon>
        <taxon>Candida</taxon>
    </lineage>
</organism>
<gene>
    <name evidence="4" type="primary">GIT3</name>
    <name type="ordered locus">CAALFM_C500880CA</name>
</gene>
<proteinExistence type="evidence at protein level"/>
<comment type="function">
    <text evidence="3">Glycerophosphodiester transporter that mediates uptake of glycerophosphocholine (GroPCho) with GIT4 (PubMed:24114876). GIT3 acts as the major GroPCho permease (PubMed:24114876). Does not possess detectable glycerophosphoinositol (GroPIns) transport activity (PubMed:24114876). The expanded ability to utilize GroPIns and GroPCho results from the organism's pathogenic nature and its need to occupy a variety of environments within its host organism (PubMed:24114876). This possibility is buttressed by the fact that GroPIns and GroPCho are present and abundant in human fluids (PubMed:24114876).</text>
</comment>
<comment type="catalytic activity">
    <reaction evidence="3">
        <text>sn-glycerol 3-phosphocholine(out) = sn-glycerol 3-phosphocholine(in)</text>
        <dbReference type="Rhea" id="RHEA:32911"/>
        <dbReference type="ChEBI" id="CHEBI:16870"/>
    </reaction>
    <physiologicalReaction direction="left-to-right" evidence="3">
        <dbReference type="Rhea" id="RHEA:32912"/>
    </physiologicalReaction>
</comment>
<comment type="biophysicochemical properties">
    <kinetics>
        <KM evidence="3">45 uM for glycerophosphocholine transport</KM>
    </kinetics>
</comment>
<comment type="subcellular location">
    <subcellularLocation>
        <location evidence="6">Cell membrane</location>
        <topology evidence="1">Multi-pass membrane protein</topology>
    </subcellularLocation>
</comment>
<comment type="induction">
    <text>Expression is positively regulated by the transcription factor PHO4 (PubMed:24114876).</text>
</comment>
<comment type="disruption phenotype">
    <text evidence="3">Triple deletion of GIT2, GIT3 and GIT4 impairs the uptake of glycerophosphocholine (GroPCho) and reduces virulence in a mouse model of blood stream infection (PubMed:24114876).</text>
</comment>
<comment type="similarity">
    <text evidence="5">Belongs to the major facilitator superfamily. Sugar transporter (TC 2.A.1.1) family.</text>
</comment>